<accession>Q4FPA5</accession>
<keyword id="KW-0067">ATP-binding</keyword>
<keyword id="KW-0143">Chaperone</keyword>
<keyword id="KW-0963">Cytoplasm</keyword>
<keyword id="KW-0413">Isomerase</keyword>
<keyword id="KW-0547">Nucleotide-binding</keyword>
<keyword id="KW-1185">Reference proteome</keyword>
<protein>
    <recommendedName>
        <fullName evidence="1">Chaperonin GroEL</fullName>
        <ecNumber evidence="1">5.6.1.7</ecNumber>
    </recommendedName>
    <alternativeName>
        <fullName evidence="1">60 kDa chaperonin</fullName>
    </alternativeName>
    <alternativeName>
        <fullName evidence="1">Chaperonin-60</fullName>
        <shortName evidence="1">Cpn60</shortName>
    </alternativeName>
</protein>
<name>CH60_PELUB</name>
<proteinExistence type="inferred from homology"/>
<reference key="1">
    <citation type="journal article" date="2005" name="Science">
        <title>Genome streamlining in a cosmopolitan oceanic bacterium.</title>
        <authorList>
            <person name="Giovannoni S.J."/>
            <person name="Tripp H.J."/>
            <person name="Givan S."/>
            <person name="Podar M."/>
            <person name="Vergin K.L."/>
            <person name="Baptista D."/>
            <person name="Bibbs L."/>
            <person name="Eads J."/>
            <person name="Richardson T.H."/>
            <person name="Noordewier M."/>
            <person name="Rappe M.S."/>
            <person name="Short J.M."/>
            <person name="Carrington J.C."/>
            <person name="Mathur E.J."/>
        </authorList>
    </citation>
    <scope>NUCLEOTIDE SEQUENCE [LARGE SCALE GENOMIC DNA]</scope>
    <source>
        <strain>HTCC1062</strain>
    </source>
</reference>
<sequence>MAKVVKFDSEARAAMIRGVDILANTVKVTLGPKGRNVVIDKSYGAPRITKDGVSVAKEIDLEDKFENMGAQMVKEVASKTNEEAGDGTTTATILAQAIVKEGVKYVTAGMNPMDVKRGIDAAVEHVKASLIASAKKVKDTDEIAQVGTISANGDKEIGNMIAKAMQKVGNEGVITVEEAKGVETELDVVEGMQFDRGYLSPYFITNADKMTTELENPFILLHEKKLTNLQPMVPLLEAVVQAGRPLMIISEDVEGEALATLVVNKLRGGLKVVAVKAPGFGDRRKSMLDDIAILTGGQVISEDIGVKLENVKLTDLGSCKRVKVDKDNSTIISGNGKKSEIEARCAQIKQQVGETTSDYDREKLQERLAKLAGGVAVIKVGGATEVEVKERKDRVEDALNATRAAAEEGIVVGGGCALLYASQSLDTLKVKGDDQKAGVALVAKALQAPIRQITLNAGVDGSVVVGKLLEQNKKNMGYDAQNEEYVDMFAKGIIDPVKVVRTALQDAASIAGLLVTTEAMIADKPDDKDSGAGGMSGGMPGGMGGMGGMGGMGM</sequence>
<evidence type="ECO:0000255" key="1">
    <source>
        <dbReference type="HAMAP-Rule" id="MF_00600"/>
    </source>
</evidence>
<gene>
    <name evidence="1" type="primary">groEL</name>
    <name evidence="1" type="synonym">groL</name>
    <name type="ordered locus">SAR11_0162</name>
</gene>
<comment type="function">
    <text evidence="1">Together with its co-chaperonin GroES, plays an essential role in assisting protein folding. The GroEL-GroES system forms a nano-cage that allows encapsulation of the non-native substrate proteins and provides a physical environment optimized to promote and accelerate protein folding.</text>
</comment>
<comment type="catalytic activity">
    <reaction evidence="1">
        <text>ATP + H2O + a folded polypeptide = ADP + phosphate + an unfolded polypeptide.</text>
        <dbReference type="EC" id="5.6.1.7"/>
    </reaction>
</comment>
<comment type="subunit">
    <text evidence="1">Forms a cylinder of 14 subunits composed of two heptameric rings stacked back-to-back. Interacts with the co-chaperonin GroES.</text>
</comment>
<comment type="subcellular location">
    <subcellularLocation>
        <location evidence="1">Cytoplasm</location>
    </subcellularLocation>
</comment>
<comment type="similarity">
    <text evidence="1">Belongs to the chaperonin (HSP60) family.</text>
</comment>
<organism>
    <name type="scientific">Pelagibacter ubique (strain HTCC1062)</name>
    <dbReference type="NCBI Taxonomy" id="335992"/>
    <lineage>
        <taxon>Bacteria</taxon>
        <taxon>Pseudomonadati</taxon>
        <taxon>Pseudomonadota</taxon>
        <taxon>Alphaproteobacteria</taxon>
        <taxon>Candidatus Pelagibacterales</taxon>
        <taxon>Candidatus Pelagibacteraceae</taxon>
        <taxon>Candidatus Pelagibacter</taxon>
    </lineage>
</organism>
<dbReference type="EC" id="5.6.1.7" evidence="1"/>
<dbReference type="EMBL" id="CP000084">
    <property type="protein sequence ID" value="AAZ20984.1"/>
    <property type="molecule type" value="Genomic_DNA"/>
</dbReference>
<dbReference type="RefSeq" id="WP_011281510.1">
    <property type="nucleotide sequence ID" value="NC_007205.1"/>
</dbReference>
<dbReference type="SMR" id="Q4FPA5"/>
<dbReference type="STRING" id="335992.SAR11_0162"/>
<dbReference type="GeneID" id="66294662"/>
<dbReference type="KEGG" id="pub:SAR11_0162"/>
<dbReference type="eggNOG" id="COG0459">
    <property type="taxonomic scope" value="Bacteria"/>
</dbReference>
<dbReference type="HOGENOM" id="CLU_016503_3_0_5"/>
<dbReference type="OrthoDB" id="9766614at2"/>
<dbReference type="Proteomes" id="UP000002528">
    <property type="component" value="Chromosome"/>
</dbReference>
<dbReference type="GO" id="GO:0005737">
    <property type="term" value="C:cytoplasm"/>
    <property type="evidence" value="ECO:0007669"/>
    <property type="project" value="UniProtKB-SubCell"/>
</dbReference>
<dbReference type="GO" id="GO:0005524">
    <property type="term" value="F:ATP binding"/>
    <property type="evidence" value="ECO:0007669"/>
    <property type="project" value="UniProtKB-UniRule"/>
</dbReference>
<dbReference type="GO" id="GO:0140662">
    <property type="term" value="F:ATP-dependent protein folding chaperone"/>
    <property type="evidence" value="ECO:0007669"/>
    <property type="project" value="InterPro"/>
</dbReference>
<dbReference type="GO" id="GO:0016853">
    <property type="term" value="F:isomerase activity"/>
    <property type="evidence" value="ECO:0007669"/>
    <property type="project" value="UniProtKB-KW"/>
</dbReference>
<dbReference type="GO" id="GO:0051082">
    <property type="term" value="F:unfolded protein binding"/>
    <property type="evidence" value="ECO:0007669"/>
    <property type="project" value="UniProtKB-UniRule"/>
</dbReference>
<dbReference type="GO" id="GO:0042026">
    <property type="term" value="P:protein refolding"/>
    <property type="evidence" value="ECO:0007669"/>
    <property type="project" value="UniProtKB-UniRule"/>
</dbReference>
<dbReference type="CDD" id="cd03344">
    <property type="entry name" value="GroEL"/>
    <property type="match status" value="1"/>
</dbReference>
<dbReference type="FunFam" id="1.10.560.10:FF:000001">
    <property type="entry name" value="60 kDa chaperonin"/>
    <property type="match status" value="1"/>
</dbReference>
<dbReference type="FunFam" id="3.50.7.10:FF:000001">
    <property type="entry name" value="60 kDa chaperonin"/>
    <property type="match status" value="1"/>
</dbReference>
<dbReference type="Gene3D" id="3.50.7.10">
    <property type="entry name" value="GroEL"/>
    <property type="match status" value="1"/>
</dbReference>
<dbReference type="Gene3D" id="1.10.560.10">
    <property type="entry name" value="GroEL-like equatorial domain"/>
    <property type="match status" value="1"/>
</dbReference>
<dbReference type="Gene3D" id="3.30.260.10">
    <property type="entry name" value="TCP-1-like chaperonin intermediate domain"/>
    <property type="match status" value="1"/>
</dbReference>
<dbReference type="HAMAP" id="MF_00600">
    <property type="entry name" value="CH60"/>
    <property type="match status" value="1"/>
</dbReference>
<dbReference type="InterPro" id="IPR018370">
    <property type="entry name" value="Chaperonin_Cpn60_CS"/>
</dbReference>
<dbReference type="InterPro" id="IPR001844">
    <property type="entry name" value="Cpn60/GroEL"/>
</dbReference>
<dbReference type="InterPro" id="IPR002423">
    <property type="entry name" value="Cpn60/GroEL/TCP-1"/>
</dbReference>
<dbReference type="InterPro" id="IPR027409">
    <property type="entry name" value="GroEL-like_apical_dom_sf"/>
</dbReference>
<dbReference type="InterPro" id="IPR027413">
    <property type="entry name" value="GROEL-like_equatorial_sf"/>
</dbReference>
<dbReference type="InterPro" id="IPR027410">
    <property type="entry name" value="TCP-1-like_intermed_sf"/>
</dbReference>
<dbReference type="NCBIfam" id="TIGR02348">
    <property type="entry name" value="GroEL"/>
    <property type="match status" value="1"/>
</dbReference>
<dbReference type="NCBIfam" id="NF000592">
    <property type="entry name" value="PRK00013.1"/>
    <property type="match status" value="1"/>
</dbReference>
<dbReference type="NCBIfam" id="NF009487">
    <property type="entry name" value="PRK12849.1"/>
    <property type="match status" value="1"/>
</dbReference>
<dbReference type="NCBIfam" id="NF009488">
    <property type="entry name" value="PRK12850.1"/>
    <property type="match status" value="1"/>
</dbReference>
<dbReference type="NCBIfam" id="NF009489">
    <property type="entry name" value="PRK12851.1"/>
    <property type="match status" value="1"/>
</dbReference>
<dbReference type="PANTHER" id="PTHR45633">
    <property type="entry name" value="60 KDA HEAT SHOCK PROTEIN, MITOCHONDRIAL"/>
    <property type="match status" value="1"/>
</dbReference>
<dbReference type="Pfam" id="PF00118">
    <property type="entry name" value="Cpn60_TCP1"/>
    <property type="match status" value="1"/>
</dbReference>
<dbReference type="PRINTS" id="PR00298">
    <property type="entry name" value="CHAPERONIN60"/>
</dbReference>
<dbReference type="SUPFAM" id="SSF52029">
    <property type="entry name" value="GroEL apical domain-like"/>
    <property type="match status" value="1"/>
</dbReference>
<dbReference type="SUPFAM" id="SSF48592">
    <property type="entry name" value="GroEL equatorial domain-like"/>
    <property type="match status" value="1"/>
</dbReference>
<dbReference type="SUPFAM" id="SSF54849">
    <property type="entry name" value="GroEL-intermediate domain like"/>
    <property type="match status" value="1"/>
</dbReference>
<dbReference type="PROSITE" id="PS00296">
    <property type="entry name" value="CHAPERONINS_CPN60"/>
    <property type="match status" value="1"/>
</dbReference>
<feature type="chain" id="PRO_0000256942" description="Chaperonin GroEL">
    <location>
        <begin position="1"/>
        <end position="554"/>
    </location>
</feature>
<feature type="binding site" evidence="1">
    <location>
        <begin position="29"/>
        <end position="32"/>
    </location>
    <ligand>
        <name>ATP</name>
        <dbReference type="ChEBI" id="CHEBI:30616"/>
    </ligand>
</feature>
<feature type="binding site" evidence="1">
    <location>
        <position position="50"/>
    </location>
    <ligand>
        <name>ATP</name>
        <dbReference type="ChEBI" id="CHEBI:30616"/>
    </ligand>
</feature>
<feature type="binding site" evidence="1">
    <location>
        <begin position="86"/>
        <end position="90"/>
    </location>
    <ligand>
        <name>ATP</name>
        <dbReference type="ChEBI" id="CHEBI:30616"/>
    </ligand>
</feature>
<feature type="binding site" evidence="1">
    <location>
        <position position="414"/>
    </location>
    <ligand>
        <name>ATP</name>
        <dbReference type="ChEBI" id="CHEBI:30616"/>
    </ligand>
</feature>
<feature type="binding site" evidence="1">
    <location>
        <position position="495"/>
    </location>
    <ligand>
        <name>ATP</name>
        <dbReference type="ChEBI" id="CHEBI:30616"/>
    </ligand>
</feature>